<proteinExistence type="inferred from homology"/>
<keyword id="KW-0169">Cobalamin biosynthesis</keyword>
<keyword id="KW-0315">Glutamine amidotransferase</keyword>
<accession>Q7U5J9</accession>
<sequence length="496" mass="54640">MNRKRPLMVLGTSSGAGKSLMTAALCRVLHRRGEQPLPFKGQNMSNNAWVDADGGEMAYSQAMQAWAAGLEPCCAMNPVLLKPRGDSTSEVIHGGTSVGLARAEHYYRDWFRPGWQAIREGLQTMQQRWPNGRLVLEGAGSPVEVNLQRRDLTNLRLAQYLRANCLLVADIERGGVFAQIVGTLALLRPVERPLIKGILINRFRGRRELFDEGRSWLEQHTGVPVLGVMPWLNDLFPPEDSLDLLERKPNRGPTDLEIAVLKLPSISNFSDLDPLEAEPSLRLRWVHPGDSLGSPDAVLLPGSKQTLRDLETLRSSGLDRQLTAYATNGGSLLAICGGMQLLGQELHDPEQLEGGDGAGPWPGLGLLPLTTEFGGTKALRQREVQALWPGTTPISGFELHHGSTWASDDLQPICNEPGLGWWCATPAGGCIAGTYLHGLLDNGPWRRRWLNQLRERKGLAPLITGLPHHGEHRHQLLERLADAFEQHVDLTPLLQP</sequence>
<evidence type="ECO:0000255" key="1">
    <source>
        <dbReference type="HAMAP-Rule" id="MF_00028"/>
    </source>
</evidence>
<gene>
    <name evidence="1" type="primary">cobQ</name>
    <name type="synonym">cobB</name>
    <name type="ordered locus">SYNW1704</name>
</gene>
<protein>
    <recommendedName>
        <fullName evidence="1">Cobyric acid synthase</fullName>
    </recommendedName>
</protein>
<name>COBQ_PARMW</name>
<dbReference type="EMBL" id="BX569693">
    <property type="protein sequence ID" value="CAE08219.1"/>
    <property type="molecule type" value="Genomic_DNA"/>
</dbReference>
<dbReference type="SMR" id="Q7U5J9"/>
<dbReference type="STRING" id="84588.SYNW1704"/>
<dbReference type="KEGG" id="syw:SYNW1704"/>
<dbReference type="eggNOG" id="COG1492">
    <property type="taxonomic scope" value="Bacteria"/>
</dbReference>
<dbReference type="HOGENOM" id="CLU_019250_2_2_3"/>
<dbReference type="UniPathway" id="UPA00148"/>
<dbReference type="Proteomes" id="UP000001422">
    <property type="component" value="Chromosome"/>
</dbReference>
<dbReference type="GO" id="GO:0015420">
    <property type="term" value="F:ABC-type vitamin B12 transporter activity"/>
    <property type="evidence" value="ECO:0007669"/>
    <property type="project" value="UniProtKB-UniRule"/>
</dbReference>
<dbReference type="GO" id="GO:0003824">
    <property type="term" value="F:catalytic activity"/>
    <property type="evidence" value="ECO:0007669"/>
    <property type="project" value="InterPro"/>
</dbReference>
<dbReference type="GO" id="GO:0009236">
    <property type="term" value="P:cobalamin biosynthetic process"/>
    <property type="evidence" value="ECO:0007669"/>
    <property type="project" value="UniProtKB-UniRule"/>
</dbReference>
<dbReference type="CDD" id="cd01750">
    <property type="entry name" value="GATase1_CobQ"/>
    <property type="match status" value="1"/>
</dbReference>
<dbReference type="Gene3D" id="3.40.50.880">
    <property type="match status" value="1"/>
</dbReference>
<dbReference type="Gene3D" id="3.40.50.300">
    <property type="entry name" value="P-loop containing nucleotide triphosphate hydrolases"/>
    <property type="match status" value="1"/>
</dbReference>
<dbReference type="HAMAP" id="MF_00028">
    <property type="entry name" value="CobQ"/>
    <property type="match status" value="1"/>
</dbReference>
<dbReference type="InterPro" id="IPR029062">
    <property type="entry name" value="Class_I_gatase-like"/>
</dbReference>
<dbReference type="InterPro" id="IPR002586">
    <property type="entry name" value="CobQ/CobB/MinD/ParA_Nub-bd_dom"/>
</dbReference>
<dbReference type="InterPro" id="IPR033949">
    <property type="entry name" value="CobQ_GATase1"/>
</dbReference>
<dbReference type="InterPro" id="IPR004459">
    <property type="entry name" value="CobQ_synth"/>
</dbReference>
<dbReference type="InterPro" id="IPR011698">
    <property type="entry name" value="GATase_3"/>
</dbReference>
<dbReference type="InterPro" id="IPR027417">
    <property type="entry name" value="P-loop_NTPase"/>
</dbReference>
<dbReference type="NCBIfam" id="TIGR00313">
    <property type="entry name" value="cobQ"/>
    <property type="match status" value="1"/>
</dbReference>
<dbReference type="NCBIfam" id="NF001989">
    <property type="entry name" value="PRK00784.1"/>
    <property type="match status" value="1"/>
</dbReference>
<dbReference type="PANTHER" id="PTHR21343:SF1">
    <property type="entry name" value="COBYRIC ACID SYNTHASE"/>
    <property type="match status" value="1"/>
</dbReference>
<dbReference type="PANTHER" id="PTHR21343">
    <property type="entry name" value="DETHIOBIOTIN SYNTHETASE"/>
    <property type="match status" value="1"/>
</dbReference>
<dbReference type="Pfam" id="PF01656">
    <property type="entry name" value="CbiA"/>
    <property type="match status" value="1"/>
</dbReference>
<dbReference type="Pfam" id="PF07685">
    <property type="entry name" value="GATase_3"/>
    <property type="match status" value="1"/>
</dbReference>
<dbReference type="SUPFAM" id="SSF52317">
    <property type="entry name" value="Class I glutamine amidotransferase-like"/>
    <property type="match status" value="1"/>
</dbReference>
<dbReference type="SUPFAM" id="SSF52540">
    <property type="entry name" value="P-loop containing nucleoside triphosphate hydrolases"/>
    <property type="match status" value="1"/>
</dbReference>
<dbReference type="PROSITE" id="PS51274">
    <property type="entry name" value="GATASE_COBBQ"/>
    <property type="match status" value="1"/>
</dbReference>
<organism>
    <name type="scientific">Parasynechococcus marenigrum (strain WH8102)</name>
    <dbReference type="NCBI Taxonomy" id="84588"/>
    <lineage>
        <taxon>Bacteria</taxon>
        <taxon>Bacillati</taxon>
        <taxon>Cyanobacteriota</taxon>
        <taxon>Cyanophyceae</taxon>
        <taxon>Synechococcales</taxon>
        <taxon>Prochlorococcaceae</taxon>
        <taxon>Parasynechococcus</taxon>
        <taxon>Parasynechococcus marenigrum</taxon>
    </lineage>
</organism>
<feature type="chain" id="PRO_0000141335" description="Cobyric acid synthase">
    <location>
        <begin position="1"/>
        <end position="496"/>
    </location>
</feature>
<feature type="domain" description="GATase cobBQ-type" evidence="1">
    <location>
        <begin position="255"/>
        <end position="445"/>
    </location>
</feature>
<feature type="active site" description="Nucleophile" evidence="1">
    <location>
        <position position="336"/>
    </location>
</feature>
<feature type="active site" evidence="1">
    <location>
        <position position="437"/>
    </location>
</feature>
<comment type="function">
    <text evidence="1">Catalyzes amidations at positions B, D, E, and G on adenosylcobyrinic A,C-diamide. NH(2) groups are provided by glutamine, and one molecule of ATP is hydrogenolyzed for each amidation.</text>
</comment>
<comment type="pathway">
    <text evidence="1">Cofactor biosynthesis; adenosylcobalamin biosynthesis.</text>
</comment>
<comment type="similarity">
    <text evidence="1">Belongs to the CobB/CobQ family. CobQ subfamily.</text>
</comment>
<reference key="1">
    <citation type="journal article" date="2003" name="Nature">
        <title>The genome of a motile marine Synechococcus.</title>
        <authorList>
            <person name="Palenik B."/>
            <person name="Brahamsha B."/>
            <person name="Larimer F.W."/>
            <person name="Land M.L."/>
            <person name="Hauser L."/>
            <person name="Chain P."/>
            <person name="Lamerdin J.E."/>
            <person name="Regala W."/>
            <person name="Allen E.E."/>
            <person name="McCarren J."/>
            <person name="Paulsen I.T."/>
            <person name="Dufresne A."/>
            <person name="Partensky F."/>
            <person name="Webb E.A."/>
            <person name="Waterbury J."/>
        </authorList>
    </citation>
    <scope>NUCLEOTIDE SEQUENCE [LARGE SCALE GENOMIC DNA]</scope>
    <source>
        <strain>WH8102</strain>
    </source>
</reference>